<organism>
    <name type="scientific">Bacillus anthracis</name>
    <dbReference type="NCBI Taxonomy" id="1392"/>
    <lineage>
        <taxon>Bacteria</taxon>
        <taxon>Bacillati</taxon>
        <taxon>Bacillota</taxon>
        <taxon>Bacilli</taxon>
        <taxon>Bacillales</taxon>
        <taxon>Bacillaceae</taxon>
        <taxon>Bacillus</taxon>
        <taxon>Bacillus cereus group</taxon>
    </lineage>
</organism>
<accession>Q6HUG3</accession>
<accession>Q6KNQ0</accession>
<accession>Q81WB8</accession>
<gene>
    <name evidence="1" type="primary">rpmF</name>
    <name type="ordered locus">BA_4062</name>
    <name type="ordered locus">GBAA_4062</name>
    <name type="ordered locus">BAS3774</name>
</gene>
<evidence type="ECO:0000255" key="1">
    <source>
        <dbReference type="HAMAP-Rule" id="MF_00340"/>
    </source>
</evidence>
<evidence type="ECO:0000305" key="2"/>
<proteinExistence type="inferred from homology"/>
<comment type="similarity">
    <text evidence="1">Belongs to the bacterial ribosomal protein bL32 family.</text>
</comment>
<comment type="sequence caution" evidence="2">
    <conflict type="erroneous initiation">
        <sequence resource="EMBL-CDS" id="AAT56076"/>
    </conflict>
</comment>
<sequence length="57" mass="6394">MAVPFRRTSKTVKRKRRTHFKLSVPGMVECPSCGEAKLAHRVCKACGTYKGKEVISK</sequence>
<feature type="chain" id="PRO_0000172301" description="Large ribosomal subunit protein bL32">
    <location>
        <begin position="1"/>
        <end position="57"/>
    </location>
</feature>
<reference key="1">
    <citation type="journal article" date="2003" name="Nature">
        <title>The genome sequence of Bacillus anthracis Ames and comparison to closely related bacteria.</title>
        <authorList>
            <person name="Read T.D."/>
            <person name="Peterson S.N."/>
            <person name="Tourasse N.J."/>
            <person name="Baillie L.W."/>
            <person name="Paulsen I.T."/>
            <person name="Nelson K.E."/>
            <person name="Tettelin H."/>
            <person name="Fouts D.E."/>
            <person name="Eisen J.A."/>
            <person name="Gill S.R."/>
            <person name="Holtzapple E.K."/>
            <person name="Okstad O.A."/>
            <person name="Helgason E."/>
            <person name="Rilstone J."/>
            <person name="Wu M."/>
            <person name="Kolonay J.F."/>
            <person name="Beanan M.J."/>
            <person name="Dodson R.J."/>
            <person name="Brinkac L.M."/>
            <person name="Gwinn M.L."/>
            <person name="DeBoy R.T."/>
            <person name="Madpu R."/>
            <person name="Daugherty S.C."/>
            <person name="Durkin A.S."/>
            <person name="Haft D.H."/>
            <person name="Nelson W.C."/>
            <person name="Peterson J.D."/>
            <person name="Pop M."/>
            <person name="Khouri H.M."/>
            <person name="Radune D."/>
            <person name="Benton J.L."/>
            <person name="Mahamoud Y."/>
            <person name="Jiang L."/>
            <person name="Hance I.R."/>
            <person name="Weidman J.F."/>
            <person name="Berry K.J."/>
            <person name="Plaut R.D."/>
            <person name="Wolf A.M."/>
            <person name="Watkins K.L."/>
            <person name="Nierman W.C."/>
            <person name="Hazen A."/>
            <person name="Cline R.T."/>
            <person name="Redmond C."/>
            <person name="Thwaite J.E."/>
            <person name="White O."/>
            <person name="Salzberg S.L."/>
            <person name="Thomason B."/>
            <person name="Friedlander A.M."/>
            <person name="Koehler T.M."/>
            <person name="Hanna P.C."/>
            <person name="Kolstoe A.-B."/>
            <person name="Fraser C.M."/>
        </authorList>
    </citation>
    <scope>NUCLEOTIDE SEQUENCE [LARGE SCALE GENOMIC DNA]</scope>
    <source>
        <strain>Ames / isolate Porton</strain>
    </source>
</reference>
<reference key="2">
    <citation type="journal article" date="2009" name="J. Bacteriol.">
        <title>The complete genome sequence of Bacillus anthracis Ames 'Ancestor'.</title>
        <authorList>
            <person name="Ravel J."/>
            <person name="Jiang L."/>
            <person name="Stanley S.T."/>
            <person name="Wilson M.R."/>
            <person name="Decker R.S."/>
            <person name="Read T.D."/>
            <person name="Worsham P."/>
            <person name="Keim P.S."/>
            <person name="Salzberg S.L."/>
            <person name="Fraser-Liggett C.M."/>
            <person name="Rasko D.A."/>
        </authorList>
    </citation>
    <scope>NUCLEOTIDE SEQUENCE [LARGE SCALE GENOMIC DNA]</scope>
    <source>
        <strain>Ames ancestor</strain>
    </source>
</reference>
<reference key="3">
    <citation type="submission" date="2004-01" db="EMBL/GenBank/DDBJ databases">
        <title>Complete genome sequence of Bacillus anthracis Sterne.</title>
        <authorList>
            <person name="Brettin T.S."/>
            <person name="Bruce D."/>
            <person name="Challacombe J.F."/>
            <person name="Gilna P."/>
            <person name="Han C."/>
            <person name="Hill K."/>
            <person name="Hitchcock P."/>
            <person name="Jackson P."/>
            <person name="Keim P."/>
            <person name="Longmire J."/>
            <person name="Lucas S."/>
            <person name="Okinaka R."/>
            <person name="Richardson P."/>
            <person name="Rubin E."/>
            <person name="Tice H."/>
        </authorList>
    </citation>
    <scope>NUCLEOTIDE SEQUENCE [LARGE SCALE GENOMIC DNA]</scope>
    <source>
        <strain>Sterne</strain>
    </source>
</reference>
<dbReference type="EMBL" id="AE016879">
    <property type="protein sequence ID" value="AAP27788.1"/>
    <property type="molecule type" value="Genomic_DNA"/>
</dbReference>
<dbReference type="EMBL" id="AE017334">
    <property type="protein sequence ID" value="AAT33181.2"/>
    <property type="molecule type" value="Genomic_DNA"/>
</dbReference>
<dbReference type="EMBL" id="AE017225">
    <property type="protein sequence ID" value="AAT56076.1"/>
    <property type="status" value="ALT_INIT"/>
    <property type="molecule type" value="Genomic_DNA"/>
</dbReference>
<dbReference type="RefSeq" id="NP_846302.1">
    <property type="nucleotide sequence ID" value="NC_003997.3"/>
</dbReference>
<dbReference type="RefSeq" id="WP_001984764.1">
    <property type="nucleotide sequence ID" value="NZ_WXXJ01000026.1"/>
</dbReference>
<dbReference type="SMR" id="Q6HUG3"/>
<dbReference type="STRING" id="261594.GBAA_4062"/>
<dbReference type="DNASU" id="1086085"/>
<dbReference type="GeneID" id="93007188"/>
<dbReference type="KEGG" id="ban:BA_4062"/>
<dbReference type="KEGG" id="bar:GBAA_4062"/>
<dbReference type="KEGG" id="bat:BAS3774"/>
<dbReference type="PATRIC" id="fig|198094.11.peg.4034"/>
<dbReference type="eggNOG" id="COG0333">
    <property type="taxonomic scope" value="Bacteria"/>
</dbReference>
<dbReference type="HOGENOM" id="CLU_129084_1_3_9"/>
<dbReference type="OMA" id="PHRVCPH"/>
<dbReference type="OrthoDB" id="9812874at2"/>
<dbReference type="Proteomes" id="UP000000427">
    <property type="component" value="Chromosome"/>
</dbReference>
<dbReference type="Proteomes" id="UP000000594">
    <property type="component" value="Chromosome"/>
</dbReference>
<dbReference type="GO" id="GO:0015934">
    <property type="term" value="C:large ribosomal subunit"/>
    <property type="evidence" value="ECO:0007669"/>
    <property type="project" value="InterPro"/>
</dbReference>
<dbReference type="GO" id="GO:0003735">
    <property type="term" value="F:structural constituent of ribosome"/>
    <property type="evidence" value="ECO:0007669"/>
    <property type="project" value="InterPro"/>
</dbReference>
<dbReference type="GO" id="GO:0006412">
    <property type="term" value="P:translation"/>
    <property type="evidence" value="ECO:0007669"/>
    <property type="project" value="UniProtKB-UniRule"/>
</dbReference>
<dbReference type="HAMAP" id="MF_00340">
    <property type="entry name" value="Ribosomal_bL32"/>
    <property type="match status" value="1"/>
</dbReference>
<dbReference type="InterPro" id="IPR002677">
    <property type="entry name" value="Ribosomal_bL32"/>
</dbReference>
<dbReference type="InterPro" id="IPR044957">
    <property type="entry name" value="Ribosomal_bL32_bact"/>
</dbReference>
<dbReference type="InterPro" id="IPR011332">
    <property type="entry name" value="Ribosomal_zn-bd"/>
</dbReference>
<dbReference type="NCBIfam" id="TIGR01031">
    <property type="entry name" value="rpmF_bact"/>
    <property type="match status" value="1"/>
</dbReference>
<dbReference type="PANTHER" id="PTHR35534">
    <property type="entry name" value="50S RIBOSOMAL PROTEIN L32"/>
    <property type="match status" value="1"/>
</dbReference>
<dbReference type="PANTHER" id="PTHR35534:SF2">
    <property type="entry name" value="LARGE RIBOSOMAL SUBUNIT PROTEIN BL32"/>
    <property type="match status" value="1"/>
</dbReference>
<dbReference type="Pfam" id="PF01783">
    <property type="entry name" value="Ribosomal_L32p"/>
    <property type="match status" value="1"/>
</dbReference>
<dbReference type="SUPFAM" id="SSF57829">
    <property type="entry name" value="Zn-binding ribosomal proteins"/>
    <property type="match status" value="1"/>
</dbReference>
<protein>
    <recommendedName>
        <fullName evidence="1">Large ribosomal subunit protein bL32</fullName>
    </recommendedName>
    <alternativeName>
        <fullName evidence="2">50S ribosomal protein L32</fullName>
    </alternativeName>
</protein>
<name>RL32_BACAN</name>
<keyword id="KW-1185">Reference proteome</keyword>
<keyword id="KW-0687">Ribonucleoprotein</keyword>
<keyword id="KW-0689">Ribosomal protein</keyword>